<reference key="1">
    <citation type="journal article" date="2002" name="Genome Res.">
        <title>A complete sequence of the T. tengcongensis genome.</title>
        <authorList>
            <person name="Bao Q."/>
            <person name="Tian Y."/>
            <person name="Li W."/>
            <person name="Xu Z."/>
            <person name="Xuan Z."/>
            <person name="Hu S."/>
            <person name="Dong W."/>
            <person name="Yang J."/>
            <person name="Chen Y."/>
            <person name="Xue Y."/>
            <person name="Xu Y."/>
            <person name="Lai X."/>
            <person name="Huang L."/>
            <person name="Dong X."/>
            <person name="Ma Y."/>
            <person name="Ling L."/>
            <person name="Tan H."/>
            <person name="Chen R."/>
            <person name="Wang J."/>
            <person name="Yu J."/>
            <person name="Yang H."/>
        </authorList>
    </citation>
    <scope>NUCLEOTIDE SEQUENCE [LARGE SCALE GENOMIC DNA]</scope>
    <source>
        <strain>DSM 15242 / JCM 11007 / NBRC 100824 / MB4</strain>
    </source>
</reference>
<protein>
    <recommendedName>
        <fullName evidence="1">RNA-binding protein Hfq</fullName>
    </recommendedName>
</protein>
<gene>
    <name evidence="1" type="primary">hfq</name>
    <name type="ordered locus">TTE1360</name>
</gene>
<comment type="function">
    <text evidence="1">RNA chaperone that binds small regulatory RNA (sRNAs) and mRNAs to facilitate mRNA translational regulation in response to envelope stress, environmental stress and changes in metabolite concentrations. Also binds with high specificity to tRNAs.</text>
</comment>
<comment type="subunit">
    <text evidence="1">Homohexamer.</text>
</comment>
<comment type="similarity">
    <text evidence="1">Belongs to the Hfq family.</text>
</comment>
<proteinExistence type="inferred from homology"/>
<feature type="chain" id="PRO_0000095665" description="RNA-binding protein Hfq">
    <location>
        <begin position="1"/>
        <end position="86"/>
    </location>
</feature>
<feature type="domain" description="Sm" evidence="2">
    <location>
        <begin position="12"/>
        <end position="73"/>
    </location>
</feature>
<dbReference type="EMBL" id="AE008691">
    <property type="protein sequence ID" value="AAM24582.1"/>
    <property type="molecule type" value="Genomic_DNA"/>
</dbReference>
<dbReference type="RefSeq" id="WP_011025654.1">
    <property type="nucleotide sequence ID" value="NZ_JANUCV010000001.1"/>
</dbReference>
<dbReference type="SMR" id="Q8RA69"/>
<dbReference type="STRING" id="273068.TTE1360"/>
<dbReference type="KEGG" id="tte:TTE1360"/>
<dbReference type="eggNOG" id="COG1923">
    <property type="taxonomic scope" value="Bacteria"/>
</dbReference>
<dbReference type="HOGENOM" id="CLU_113688_0_2_9"/>
<dbReference type="OrthoDB" id="9799751at2"/>
<dbReference type="Proteomes" id="UP000000555">
    <property type="component" value="Chromosome"/>
</dbReference>
<dbReference type="GO" id="GO:0005829">
    <property type="term" value="C:cytosol"/>
    <property type="evidence" value="ECO:0007669"/>
    <property type="project" value="TreeGrafter"/>
</dbReference>
<dbReference type="GO" id="GO:0003723">
    <property type="term" value="F:RNA binding"/>
    <property type="evidence" value="ECO:0007669"/>
    <property type="project" value="UniProtKB-UniRule"/>
</dbReference>
<dbReference type="GO" id="GO:0006355">
    <property type="term" value="P:regulation of DNA-templated transcription"/>
    <property type="evidence" value="ECO:0007669"/>
    <property type="project" value="InterPro"/>
</dbReference>
<dbReference type="GO" id="GO:0043487">
    <property type="term" value="P:regulation of RNA stability"/>
    <property type="evidence" value="ECO:0007669"/>
    <property type="project" value="TreeGrafter"/>
</dbReference>
<dbReference type="GO" id="GO:0045974">
    <property type="term" value="P:regulation of translation, ncRNA-mediated"/>
    <property type="evidence" value="ECO:0007669"/>
    <property type="project" value="TreeGrafter"/>
</dbReference>
<dbReference type="CDD" id="cd01716">
    <property type="entry name" value="Hfq"/>
    <property type="match status" value="1"/>
</dbReference>
<dbReference type="FunFam" id="2.30.30.100:FF:000012">
    <property type="entry name" value="RNA-binding protein Hfq"/>
    <property type="match status" value="1"/>
</dbReference>
<dbReference type="Gene3D" id="2.30.30.100">
    <property type="match status" value="1"/>
</dbReference>
<dbReference type="HAMAP" id="MF_00436">
    <property type="entry name" value="Hfq"/>
    <property type="match status" value="1"/>
</dbReference>
<dbReference type="InterPro" id="IPR005001">
    <property type="entry name" value="Hfq"/>
</dbReference>
<dbReference type="InterPro" id="IPR010920">
    <property type="entry name" value="LSM_dom_sf"/>
</dbReference>
<dbReference type="InterPro" id="IPR047575">
    <property type="entry name" value="Sm"/>
</dbReference>
<dbReference type="NCBIfam" id="TIGR02383">
    <property type="entry name" value="Hfq"/>
    <property type="match status" value="1"/>
</dbReference>
<dbReference type="NCBIfam" id="NF001602">
    <property type="entry name" value="PRK00395.1"/>
    <property type="match status" value="1"/>
</dbReference>
<dbReference type="PANTHER" id="PTHR34772">
    <property type="entry name" value="RNA-BINDING PROTEIN HFQ"/>
    <property type="match status" value="1"/>
</dbReference>
<dbReference type="PANTHER" id="PTHR34772:SF1">
    <property type="entry name" value="RNA-BINDING PROTEIN HFQ"/>
    <property type="match status" value="1"/>
</dbReference>
<dbReference type="Pfam" id="PF17209">
    <property type="entry name" value="Hfq"/>
    <property type="match status" value="1"/>
</dbReference>
<dbReference type="SUPFAM" id="SSF50182">
    <property type="entry name" value="Sm-like ribonucleoproteins"/>
    <property type="match status" value="1"/>
</dbReference>
<dbReference type="PROSITE" id="PS52002">
    <property type="entry name" value="SM"/>
    <property type="match status" value="1"/>
</dbReference>
<name>HFQ_CALS4</name>
<accession>Q8RA69</accession>
<sequence length="86" mass="9666">MASSKAAINLQDIFLNQVRKEHVPVTVYLINGFQLKGTVKGFDNFTVVLESESKQQLLIYKHAISTISPQKPVIFSGSEKDDKKEE</sequence>
<keyword id="KW-1185">Reference proteome</keyword>
<keyword id="KW-0694">RNA-binding</keyword>
<keyword id="KW-0346">Stress response</keyword>
<evidence type="ECO:0000255" key="1">
    <source>
        <dbReference type="HAMAP-Rule" id="MF_00436"/>
    </source>
</evidence>
<evidence type="ECO:0000255" key="2">
    <source>
        <dbReference type="PROSITE-ProRule" id="PRU01346"/>
    </source>
</evidence>
<organism>
    <name type="scientific">Caldanaerobacter subterraneus subsp. tengcongensis (strain DSM 15242 / JCM 11007 / NBRC 100824 / MB4)</name>
    <name type="common">Thermoanaerobacter tengcongensis</name>
    <dbReference type="NCBI Taxonomy" id="273068"/>
    <lineage>
        <taxon>Bacteria</taxon>
        <taxon>Bacillati</taxon>
        <taxon>Bacillota</taxon>
        <taxon>Clostridia</taxon>
        <taxon>Thermoanaerobacterales</taxon>
        <taxon>Thermoanaerobacteraceae</taxon>
        <taxon>Caldanaerobacter</taxon>
    </lineage>
</organism>